<feature type="chain" id="PRO_0000263777" description="Translation initiation factor IF-1">
    <location>
        <begin position="1"/>
        <end position="72"/>
    </location>
</feature>
<feature type="domain" description="S1-like" evidence="1">
    <location>
        <begin position="1"/>
        <end position="72"/>
    </location>
</feature>
<feature type="strand" evidence="2">
    <location>
        <begin position="7"/>
        <end position="17"/>
    </location>
</feature>
<feature type="turn" evidence="2">
    <location>
        <begin position="18"/>
        <end position="20"/>
    </location>
</feature>
<feature type="strand" evidence="2">
    <location>
        <begin position="21"/>
        <end position="25"/>
    </location>
</feature>
<feature type="strand" evidence="2">
    <location>
        <begin position="27"/>
        <end position="29"/>
    </location>
</feature>
<feature type="strand" evidence="2">
    <location>
        <begin position="31"/>
        <end position="36"/>
    </location>
</feature>
<feature type="helix" evidence="2">
    <location>
        <begin position="40"/>
        <end position="42"/>
    </location>
</feature>
<feature type="strand" evidence="2">
    <location>
        <begin position="52"/>
        <end position="58"/>
    </location>
</feature>
<feature type="strand" evidence="2">
    <location>
        <begin position="61"/>
        <end position="70"/>
    </location>
</feature>
<sequence>MAKDDVIQMQGEVIENLPNATFRVKLENGHVVLGHISGKMRMHYIRILPGDKVTVELTPYDLSRARIVFRAK</sequence>
<reference key="1">
    <citation type="journal article" date="2005" name="BMC Genomics">
        <title>Bacterial genome adaptation to niches: divergence of the potential virulence genes in three Burkholderia species of different survival strategies.</title>
        <authorList>
            <person name="Kim H.S."/>
            <person name="Schell M.A."/>
            <person name="Yu Y."/>
            <person name="Ulrich R.L."/>
            <person name="Sarria S.H."/>
            <person name="Nierman W.C."/>
            <person name="DeShazer D."/>
        </authorList>
    </citation>
    <scope>NUCLEOTIDE SEQUENCE [LARGE SCALE GENOMIC DNA]</scope>
    <source>
        <strain>ATCC 700388 / DSM 13276 / CCUG 48851 / CIP 106301 / E264</strain>
    </source>
</reference>
<reference key="2">
    <citation type="submission" date="2015-06" db="PDB data bank">
        <title>NMR assignments and structure of translation initiation factor IF-1 from Burkholderia thailandensis E264.</title>
        <authorList>
            <person name="Barnwal R."/>
            <person name="Varani G."/>
        </authorList>
    </citation>
    <scope>STRUCTURE BY NMR</scope>
    <source>
        <strain>ATCC 700388 / DSM 13276 / CCUG 48851 / CIP 106301 / E264</strain>
    </source>
</reference>
<protein>
    <recommendedName>
        <fullName evidence="1">Translation initiation factor IF-1</fullName>
    </recommendedName>
</protein>
<accession>Q2SU48</accession>
<gene>
    <name evidence="1" type="primary">infA</name>
    <name type="ordered locus">BTH_I3047</name>
</gene>
<name>IF1_BURTA</name>
<proteinExistence type="evidence at protein level"/>
<organism>
    <name type="scientific">Burkholderia thailandensis (strain ATCC 700388 / DSM 13276 / CCUG 48851 / CIP 106301 / E264)</name>
    <dbReference type="NCBI Taxonomy" id="271848"/>
    <lineage>
        <taxon>Bacteria</taxon>
        <taxon>Pseudomonadati</taxon>
        <taxon>Pseudomonadota</taxon>
        <taxon>Betaproteobacteria</taxon>
        <taxon>Burkholderiales</taxon>
        <taxon>Burkholderiaceae</taxon>
        <taxon>Burkholderia</taxon>
        <taxon>pseudomallei group</taxon>
    </lineage>
</organism>
<comment type="function">
    <text evidence="1">One of the essential components for the initiation of protein synthesis. Stabilizes the binding of IF-2 and IF-3 on the 30S subunit to which N-formylmethionyl-tRNA(fMet) subsequently binds. Helps modulate mRNA selection, yielding the 30S pre-initiation complex (PIC). Upon addition of the 50S ribosomal subunit IF-1, IF-2 and IF-3 are released leaving the mature 70S translation initiation complex.</text>
</comment>
<comment type="subunit">
    <text evidence="1">Component of the 30S ribosomal translation pre-initiation complex which assembles on the 30S ribosome in the order IF-2 and IF-3, IF-1 and N-formylmethionyl-tRNA(fMet); mRNA recruitment can occur at any time during PIC assembly.</text>
</comment>
<comment type="subcellular location">
    <subcellularLocation>
        <location evidence="1">Cytoplasm</location>
    </subcellularLocation>
</comment>
<comment type="similarity">
    <text evidence="1">Belongs to the IF-1 family.</text>
</comment>
<dbReference type="EMBL" id="CP000086">
    <property type="protein sequence ID" value="ABC39541.1"/>
    <property type="molecule type" value="Genomic_DNA"/>
</dbReference>
<dbReference type="RefSeq" id="WP_004521905.1">
    <property type="nucleotide sequence ID" value="NZ_CP008786.1"/>
</dbReference>
<dbReference type="PDB" id="2N3S">
    <property type="method" value="NMR"/>
    <property type="chains" value="A=1-72"/>
</dbReference>
<dbReference type="PDBsum" id="2N3S"/>
<dbReference type="SMR" id="Q2SU48"/>
<dbReference type="GeneID" id="98107139"/>
<dbReference type="KEGG" id="bte:BTH_I3047"/>
<dbReference type="HOGENOM" id="CLU_151267_1_0_4"/>
<dbReference type="EvolutionaryTrace" id="Q2SU48"/>
<dbReference type="Proteomes" id="UP000001930">
    <property type="component" value="Chromosome I"/>
</dbReference>
<dbReference type="GO" id="GO:0005829">
    <property type="term" value="C:cytosol"/>
    <property type="evidence" value="ECO:0007669"/>
    <property type="project" value="TreeGrafter"/>
</dbReference>
<dbReference type="GO" id="GO:0043022">
    <property type="term" value="F:ribosome binding"/>
    <property type="evidence" value="ECO:0007669"/>
    <property type="project" value="UniProtKB-UniRule"/>
</dbReference>
<dbReference type="GO" id="GO:0019843">
    <property type="term" value="F:rRNA binding"/>
    <property type="evidence" value="ECO:0007669"/>
    <property type="project" value="UniProtKB-UniRule"/>
</dbReference>
<dbReference type="GO" id="GO:0003743">
    <property type="term" value="F:translation initiation factor activity"/>
    <property type="evidence" value="ECO:0007669"/>
    <property type="project" value="UniProtKB-UniRule"/>
</dbReference>
<dbReference type="CDD" id="cd04451">
    <property type="entry name" value="S1_IF1"/>
    <property type="match status" value="1"/>
</dbReference>
<dbReference type="FunFam" id="2.40.50.140:FF:000002">
    <property type="entry name" value="Translation initiation factor IF-1"/>
    <property type="match status" value="1"/>
</dbReference>
<dbReference type="Gene3D" id="2.40.50.140">
    <property type="entry name" value="Nucleic acid-binding proteins"/>
    <property type="match status" value="1"/>
</dbReference>
<dbReference type="HAMAP" id="MF_00075">
    <property type="entry name" value="IF_1"/>
    <property type="match status" value="1"/>
</dbReference>
<dbReference type="InterPro" id="IPR012340">
    <property type="entry name" value="NA-bd_OB-fold"/>
</dbReference>
<dbReference type="InterPro" id="IPR006196">
    <property type="entry name" value="RNA-binding_domain_S1_IF1"/>
</dbReference>
<dbReference type="InterPro" id="IPR003029">
    <property type="entry name" value="S1_domain"/>
</dbReference>
<dbReference type="InterPro" id="IPR004368">
    <property type="entry name" value="TIF_IF1"/>
</dbReference>
<dbReference type="NCBIfam" id="TIGR00008">
    <property type="entry name" value="infA"/>
    <property type="match status" value="1"/>
</dbReference>
<dbReference type="PANTHER" id="PTHR33370">
    <property type="entry name" value="TRANSLATION INITIATION FACTOR IF-1, CHLOROPLASTIC"/>
    <property type="match status" value="1"/>
</dbReference>
<dbReference type="PANTHER" id="PTHR33370:SF1">
    <property type="entry name" value="TRANSLATION INITIATION FACTOR IF-1, CHLOROPLASTIC"/>
    <property type="match status" value="1"/>
</dbReference>
<dbReference type="Pfam" id="PF01176">
    <property type="entry name" value="eIF-1a"/>
    <property type="match status" value="1"/>
</dbReference>
<dbReference type="SMART" id="SM00316">
    <property type="entry name" value="S1"/>
    <property type="match status" value="1"/>
</dbReference>
<dbReference type="SUPFAM" id="SSF50249">
    <property type="entry name" value="Nucleic acid-binding proteins"/>
    <property type="match status" value="1"/>
</dbReference>
<dbReference type="PROSITE" id="PS50832">
    <property type="entry name" value="S1_IF1_TYPE"/>
    <property type="match status" value="1"/>
</dbReference>
<keyword id="KW-0002">3D-structure</keyword>
<keyword id="KW-0963">Cytoplasm</keyword>
<keyword id="KW-0396">Initiation factor</keyword>
<keyword id="KW-0648">Protein biosynthesis</keyword>
<keyword id="KW-0694">RNA-binding</keyword>
<keyword id="KW-0699">rRNA-binding</keyword>
<evidence type="ECO:0000255" key="1">
    <source>
        <dbReference type="HAMAP-Rule" id="MF_00075"/>
    </source>
</evidence>
<evidence type="ECO:0007829" key="2">
    <source>
        <dbReference type="PDB" id="2N3S"/>
    </source>
</evidence>